<proteinExistence type="inferred from homology"/>
<accession>B7MPT1</accession>
<name>CBPM_ECO81</name>
<gene>
    <name evidence="1" type="primary">cbpM</name>
    <name type="ordered locus">ECED1_1076</name>
</gene>
<evidence type="ECO:0000255" key="1">
    <source>
        <dbReference type="HAMAP-Rule" id="MF_01155"/>
    </source>
</evidence>
<reference key="1">
    <citation type="journal article" date="2009" name="PLoS Genet.">
        <title>Organised genome dynamics in the Escherichia coli species results in highly diverse adaptive paths.</title>
        <authorList>
            <person name="Touchon M."/>
            <person name="Hoede C."/>
            <person name="Tenaillon O."/>
            <person name="Barbe V."/>
            <person name="Baeriswyl S."/>
            <person name="Bidet P."/>
            <person name="Bingen E."/>
            <person name="Bonacorsi S."/>
            <person name="Bouchier C."/>
            <person name="Bouvet O."/>
            <person name="Calteau A."/>
            <person name="Chiapello H."/>
            <person name="Clermont O."/>
            <person name="Cruveiller S."/>
            <person name="Danchin A."/>
            <person name="Diard M."/>
            <person name="Dossat C."/>
            <person name="Karoui M.E."/>
            <person name="Frapy E."/>
            <person name="Garry L."/>
            <person name="Ghigo J.M."/>
            <person name="Gilles A.M."/>
            <person name="Johnson J."/>
            <person name="Le Bouguenec C."/>
            <person name="Lescat M."/>
            <person name="Mangenot S."/>
            <person name="Martinez-Jehanne V."/>
            <person name="Matic I."/>
            <person name="Nassif X."/>
            <person name="Oztas S."/>
            <person name="Petit M.A."/>
            <person name="Pichon C."/>
            <person name="Rouy Z."/>
            <person name="Ruf C.S."/>
            <person name="Schneider D."/>
            <person name="Tourret J."/>
            <person name="Vacherie B."/>
            <person name="Vallenet D."/>
            <person name="Medigue C."/>
            <person name="Rocha E.P.C."/>
            <person name="Denamur E."/>
        </authorList>
    </citation>
    <scope>NUCLEOTIDE SEQUENCE [LARGE SCALE GENOMIC DNA]</scope>
    <source>
        <strain>ED1a</strain>
    </source>
</reference>
<organism>
    <name type="scientific">Escherichia coli O81 (strain ED1a)</name>
    <dbReference type="NCBI Taxonomy" id="585397"/>
    <lineage>
        <taxon>Bacteria</taxon>
        <taxon>Pseudomonadati</taxon>
        <taxon>Pseudomonadota</taxon>
        <taxon>Gammaproteobacteria</taxon>
        <taxon>Enterobacterales</taxon>
        <taxon>Enterobacteriaceae</taxon>
        <taxon>Escherichia</taxon>
    </lineage>
</organism>
<feature type="chain" id="PRO_1000164291" description="Chaperone modulatory protein CbpM">
    <location>
        <begin position="1"/>
        <end position="101"/>
    </location>
</feature>
<dbReference type="EMBL" id="CU928162">
    <property type="protein sequence ID" value="CAR07277.1"/>
    <property type="molecule type" value="Genomic_DNA"/>
</dbReference>
<dbReference type="RefSeq" id="WP_000024569.1">
    <property type="nucleotide sequence ID" value="NC_011745.1"/>
</dbReference>
<dbReference type="SMR" id="B7MPT1"/>
<dbReference type="KEGG" id="ecq:ECED1_1076"/>
<dbReference type="HOGENOM" id="CLU_144710_3_1_6"/>
<dbReference type="Proteomes" id="UP000000748">
    <property type="component" value="Chromosome"/>
</dbReference>
<dbReference type="FunFam" id="1.10.1660.10:FF:000006">
    <property type="entry name" value="Chaperone modulatory protein CbpM"/>
    <property type="match status" value="1"/>
</dbReference>
<dbReference type="Gene3D" id="1.10.1660.10">
    <property type="match status" value="1"/>
</dbReference>
<dbReference type="HAMAP" id="MF_01155">
    <property type="entry name" value="CbpM"/>
    <property type="match status" value="1"/>
</dbReference>
<dbReference type="InterPro" id="IPR022835">
    <property type="entry name" value="CbpM"/>
</dbReference>
<dbReference type="NCBIfam" id="NF007617">
    <property type="entry name" value="PRK10265.1"/>
    <property type="match status" value="1"/>
</dbReference>
<dbReference type="Pfam" id="PF13591">
    <property type="entry name" value="MerR_2"/>
    <property type="match status" value="1"/>
</dbReference>
<comment type="function">
    <text evidence="1">Interacts with CbpA and inhibits both the DnaJ-like co-chaperone activity and the DNA binding activity of CbpA. Together with CbpA, modulates the activity of the DnaK chaperone system. Does not inhibit the co-chaperone activity of DnaJ.</text>
</comment>
<comment type="similarity">
    <text evidence="1">Belongs to the CbpM family.</text>
</comment>
<sequence length="101" mass="11443">MANVTVTFTITEFCLHTGISEEELNEIVGLGVVEPSEIQETTWVFDDHAAIVVQRAVRLRHELALDWPGIAVALTLMDDIAHLKQENRLLRQRLSRFVAHP</sequence>
<protein>
    <recommendedName>
        <fullName evidence="1">Chaperone modulatory protein CbpM</fullName>
    </recommendedName>
</protein>